<evidence type="ECO:0000250" key="1">
    <source>
        <dbReference type="UniProtKB" id="O60218"/>
    </source>
</evidence>
<evidence type="ECO:0000250" key="2">
    <source>
        <dbReference type="UniProtKB" id="P14550"/>
    </source>
</evidence>
<evidence type="ECO:0000250" key="3">
    <source>
        <dbReference type="UniProtKB" id="P82125"/>
    </source>
</evidence>
<evidence type="ECO:0000269" key="4">
    <source>
    </source>
</evidence>
<evidence type="ECO:0000305" key="5"/>
<keyword id="KW-0963">Cytoplasm</keyword>
<keyword id="KW-0521">NADP</keyword>
<keyword id="KW-0560">Oxidoreductase</keyword>
<keyword id="KW-1185">Reference proteome</keyword>
<protein>
    <recommendedName>
        <fullName>1,5-anhydro-D-fructose reductase</fullName>
        <shortName>AF reductase</shortName>
        <ecNumber evidence="4">1.1.1.263</ecNumber>
    </recommendedName>
    <alternativeName>
        <fullName>Aldo-keto reductase family 1 member C-like protein 2</fullName>
    </alternativeName>
    <alternativeName>
        <fullName>Aldo-keto reductase family 1 member E1</fullName>
    </alternativeName>
    <alternativeName>
        <fullName>Aldo-keto reductase family 1 member E2</fullName>
    </alternativeName>
</protein>
<comment type="function">
    <text evidence="4">Catalyzes the NADPH-dependent reduction of 1,5-anhydro-D-fructose (AF) to 1,5-anhydro-D-glucitol.</text>
</comment>
<comment type="catalytic activity">
    <reaction evidence="4">
        <text>1,5-anhydro-D-glucitol + NADP(+) = 1,5-anhydro-D-fructose + NADPH + H(+)</text>
        <dbReference type="Rhea" id="RHEA:20665"/>
        <dbReference type="ChEBI" id="CHEBI:15378"/>
        <dbReference type="ChEBI" id="CHEBI:16070"/>
        <dbReference type="ChEBI" id="CHEBI:16715"/>
        <dbReference type="ChEBI" id="CHEBI:57783"/>
        <dbReference type="ChEBI" id="CHEBI:58349"/>
        <dbReference type="EC" id="1.1.1.263"/>
    </reaction>
</comment>
<comment type="activity regulation">
    <text evidence="3">Inhibited by p-chloromercuribenzoic acid and alkyliodines.</text>
</comment>
<comment type="biophysicochemical properties">
    <kinetics>
        <KM evidence="4">1.02 mM for 1,5-anhydro-D-fructose</KM>
        <Vmax evidence="4">0.57 umol/min/mg enzyme</Vmax>
    </kinetics>
</comment>
<comment type="subunit">
    <text evidence="3">Monomer.</text>
</comment>
<comment type="subcellular location">
    <subcellularLocation>
        <location evidence="5">Cytoplasm</location>
    </subcellularLocation>
</comment>
<comment type="similarity">
    <text evidence="5">Belongs to the aldo/keto reductase family.</text>
</comment>
<name>AKCL2_MOUSE</name>
<sequence length="301" mass="34461">MENIPTVGLGTWKASPGEVTDAVKLAINLGYRHFDCAYLYHNESEVGMGISEKIKEGVVKREDLFVVSKLWCTCHKKSLVKTACTNTLEALNLDYLDLYLIHWPMGFKPGEKDIPLDRNGKVIPSHTSFLDTWEAMEDLVFEGLVKNLGVSNFNHEQLERLLDKPGLRVRPITNQIECHPYLNQKKLIDFCHKRNVSVTAYRPLGGSGGGFHLMDDTVIRKIAKKHGKSPAQILIRFQIQRNLIVIPKSVTPSRIRENIQVFDFELTEKDMEELLSLDKNLRLATFPTTENHQDYPFHIEY</sequence>
<accession>Q9DCT1</accession>
<accession>O09125</accession>
<proteinExistence type="evidence at protein level"/>
<gene>
    <name type="primary">Akr1e2</name>
    <name type="synonym">Akr1cl2</name>
    <name type="synonym">Akr1e1</name>
</gene>
<feature type="chain" id="PRO_0000124673" description="1,5-anhydro-D-fructose reductase">
    <location>
        <begin position="1"/>
        <end position="301"/>
    </location>
</feature>
<feature type="active site" description="Proton donor" evidence="1">
    <location>
        <position position="40"/>
    </location>
</feature>
<feature type="binding site" evidence="1">
    <location>
        <position position="35"/>
    </location>
    <ligand>
        <name>NADP(+)</name>
        <dbReference type="ChEBI" id="CHEBI:58349"/>
    </ligand>
</feature>
<feature type="binding site" evidence="1">
    <location>
        <position position="102"/>
    </location>
    <ligand>
        <name>substrate</name>
    </ligand>
</feature>
<feature type="binding site" evidence="1">
    <location>
        <position position="175"/>
    </location>
    <ligand>
        <name>NADP(+)</name>
        <dbReference type="ChEBI" id="CHEBI:58349"/>
    </ligand>
</feature>
<feature type="binding site" evidence="1">
    <location>
        <begin position="246"/>
        <end position="258"/>
    </location>
    <ligand>
        <name>NADP(+)</name>
        <dbReference type="ChEBI" id="CHEBI:58349"/>
    </ligand>
</feature>
<feature type="site" description="Lowers pKa of active site Tyr" evidence="2">
    <location>
        <position position="69"/>
    </location>
</feature>
<feature type="sequence conflict" description="In Ref. 1; AAB37274." evidence="5" ref="1">
    <original>M</original>
    <variation>I</variation>
    <location>
        <position position="105"/>
    </location>
</feature>
<feature type="sequence conflict" description="In Ref. 1; AAB37274." evidence="5" ref="1">
    <original>L</original>
    <variation>F</variation>
    <location>
        <position position="283"/>
    </location>
</feature>
<reference key="1">
    <citation type="book" date="1996" name="Enzymology and molecular biology of carbonyl metabolism 6">
        <title>Characterization of a novel murine aldo-keto reductase.</title>
        <editorList>
            <person name="Weiner H."/>
        </editorList>
        <authorList>
            <person name="Bohren K.M."/>
            <person name="Barski O.A."/>
            <person name="Gabbay K.H."/>
        </authorList>
    </citation>
    <scope>NUCLEOTIDE SEQUENCE [MRNA]</scope>
    <scope>CHARACTERIZATION</scope>
    <source>
        <strain>129/Sv</strain>
        <tissue>Liver</tissue>
    </source>
</reference>
<reference key="2">
    <citation type="journal article" date="2005" name="Science">
        <title>The transcriptional landscape of the mammalian genome.</title>
        <authorList>
            <person name="Carninci P."/>
            <person name="Kasukawa T."/>
            <person name="Katayama S."/>
            <person name="Gough J."/>
            <person name="Frith M.C."/>
            <person name="Maeda N."/>
            <person name="Oyama R."/>
            <person name="Ravasi T."/>
            <person name="Lenhard B."/>
            <person name="Wells C."/>
            <person name="Kodzius R."/>
            <person name="Shimokawa K."/>
            <person name="Bajic V.B."/>
            <person name="Brenner S.E."/>
            <person name="Batalov S."/>
            <person name="Forrest A.R."/>
            <person name="Zavolan M."/>
            <person name="Davis M.J."/>
            <person name="Wilming L.G."/>
            <person name="Aidinis V."/>
            <person name="Allen J.E."/>
            <person name="Ambesi-Impiombato A."/>
            <person name="Apweiler R."/>
            <person name="Aturaliya R.N."/>
            <person name="Bailey T.L."/>
            <person name="Bansal M."/>
            <person name="Baxter L."/>
            <person name="Beisel K.W."/>
            <person name="Bersano T."/>
            <person name="Bono H."/>
            <person name="Chalk A.M."/>
            <person name="Chiu K.P."/>
            <person name="Choudhary V."/>
            <person name="Christoffels A."/>
            <person name="Clutterbuck D.R."/>
            <person name="Crowe M.L."/>
            <person name="Dalla E."/>
            <person name="Dalrymple B.P."/>
            <person name="de Bono B."/>
            <person name="Della Gatta G."/>
            <person name="di Bernardo D."/>
            <person name="Down T."/>
            <person name="Engstrom P."/>
            <person name="Fagiolini M."/>
            <person name="Faulkner G."/>
            <person name="Fletcher C.F."/>
            <person name="Fukushima T."/>
            <person name="Furuno M."/>
            <person name="Futaki S."/>
            <person name="Gariboldi M."/>
            <person name="Georgii-Hemming P."/>
            <person name="Gingeras T.R."/>
            <person name="Gojobori T."/>
            <person name="Green R.E."/>
            <person name="Gustincich S."/>
            <person name="Harbers M."/>
            <person name="Hayashi Y."/>
            <person name="Hensch T.K."/>
            <person name="Hirokawa N."/>
            <person name="Hill D."/>
            <person name="Huminiecki L."/>
            <person name="Iacono M."/>
            <person name="Ikeo K."/>
            <person name="Iwama A."/>
            <person name="Ishikawa T."/>
            <person name="Jakt M."/>
            <person name="Kanapin A."/>
            <person name="Katoh M."/>
            <person name="Kawasawa Y."/>
            <person name="Kelso J."/>
            <person name="Kitamura H."/>
            <person name="Kitano H."/>
            <person name="Kollias G."/>
            <person name="Krishnan S.P."/>
            <person name="Kruger A."/>
            <person name="Kummerfeld S.K."/>
            <person name="Kurochkin I.V."/>
            <person name="Lareau L.F."/>
            <person name="Lazarevic D."/>
            <person name="Lipovich L."/>
            <person name="Liu J."/>
            <person name="Liuni S."/>
            <person name="McWilliam S."/>
            <person name="Madan Babu M."/>
            <person name="Madera M."/>
            <person name="Marchionni L."/>
            <person name="Matsuda H."/>
            <person name="Matsuzawa S."/>
            <person name="Miki H."/>
            <person name="Mignone F."/>
            <person name="Miyake S."/>
            <person name="Morris K."/>
            <person name="Mottagui-Tabar S."/>
            <person name="Mulder N."/>
            <person name="Nakano N."/>
            <person name="Nakauchi H."/>
            <person name="Ng P."/>
            <person name="Nilsson R."/>
            <person name="Nishiguchi S."/>
            <person name="Nishikawa S."/>
            <person name="Nori F."/>
            <person name="Ohara O."/>
            <person name="Okazaki Y."/>
            <person name="Orlando V."/>
            <person name="Pang K.C."/>
            <person name="Pavan W.J."/>
            <person name="Pavesi G."/>
            <person name="Pesole G."/>
            <person name="Petrovsky N."/>
            <person name="Piazza S."/>
            <person name="Reed J."/>
            <person name="Reid J.F."/>
            <person name="Ring B.Z."/>
            <person name="Ringwald M."/>
            <person name="Rost B."/>
            <person name="Ruan Y."/>
            <person name="Salzberg S.L."/>
            <person name="Sandelin A."/>
            <person name="Schneider C."/>
            <person name="Schoenbach C."/>
            <person name="Sekiguchi K."/>
            <person name="Semple C.A."/>
            <person name="Seno S."/>
            <person name="Sessa L."/>
            <person name="Sheng Y."/>
            <person name="Shibata Y."/>
            <person name="Shimada H."/>
            <person name="Shimada K."/>
            <person name="Silva D."/>
            <person name="Sinclair B."/>
            <person name="Sperling S."/>
            <person name="Stupka E."/>
            <person name="Sugiura K."/>
            <person name="Sultana R."/>
            <person name="Takenaka Y."/>
            <person name="Taki K."/>
            <person name="Tammoja K."/>
            <person name="Tan S.L."/>
            <person name="Tang S."/>
            <person name="Taylor M.S."/>
            <person name="Tegner J."/>
            <person name="Teichmann S.A."/>
            <person name="Ueda H.R."/>
            <person name="van Nimwegen E."/>
            <person name="Verardo R."/>
            <person name="Wei C.L."/>
            <person name="Yagi K."/>
            <person name="Yamanishi H."/>
            <person name="Zabarovsky E."/>
            <person name="Zhu S."/>
            <person name="Zimmer A."/>
            <person name="Hide W."/>
            <person name="Bult C."/>
            <person name="Grimmond S.M."/>
            <person name="Teasdale R.D."/>
            <person name="Liu E.T."/>
            <person name="Brusic V."/>
            <person name="Quackenbush J."/>
            <person name="Wahlestedt C."/>
            <person name="Mattick J.S."/>
            <person name="Hume D.A."/>
            <person name="Kai C."/>
            <person name="Sasaki D."/>
            <person name="Tomaru Y."/>
            <person name="Fukuda S."/>
            <person name="Kanamori-Katayama M."/>
            <person name="Suzuki M."/>
            <person name="Aoki J."/>
            <person name="Arakawa T."/>
            <person name="Iida J."/>
            <person name="Imamura K."/>
            <person name="Itoh M."/>
            <person name="Kato T."/>
            <person name="Kawaji H."/>
            <person name="Kawagashira N."/>
            <person name="Kawashima T."/>
            <person name="Kojima M."/>
            <person name="Kondo S."/>
            <person name="Konno H."/>
            <person name="Nakano K."/>
            <person name="Ninomiya N."/>
            <person name="Nishio T."/>
            <person name="Okada M."/>
            <person name="Plessy C."/>
            <person name="Shibata K."/>
            <person name="Shiraki T."/>
            <person name="Suzuki S."/>
            <person name="Tagami M."/>
            <person name="Waki K."/>
            <person name="Watahiki A."/>
            <person name="Okamura-Oho Y."/>
            <person name="Suzuki H."/>
            <person name="Kawai J."/>
            <person name="Hayashizaki Y."/>
        </authorList>
    </citation>
    <scope>NUCLEOTIDE SEQUENCE [LARGE SCALE MRNA]</scope>
    <source>
        <strain>C57BL/6J</strain>
        <tissue>Kidney</tissue>
    </source>
</reference>
<reference key="3">
    <citation type="journal article" date="2004" name="Genome Res.">
        <title>The status, quality, and expansion of the NIH full-length cDNA project: the Mammalian Gene Collection (MGC).</title>
        <authorList>
            <consortium name="The MGC Project Team"/>
        </authorList>
    </citation>
    <scope>NUCLEOTIDE SEQUENCE [LARGE SCALE MRNA]</scope>
    <source>
        <tissue>Mammary tumor</tissue>
    </source>
</reference>
<reference key="4">
    <citation type="journal article" date="2008" name="Biosci. Biotechnol. Biochem.">
        <title>Mouse AKR1E1 is an ortholog of pig liver NADPH dependent 1,5-anhydro-D-fructose reductase.</title>
        <authorList>
            <person name="Sakuma M."/>
            <person name="Kubota S."/>
        </authorList>
    </citation>
    <scope>FUNCTION</scope>
    <scope>CATALYTIC ACTIVITY</scope>
    <scope>SUBSTRATE SPECIFICITY</scope>
    <scope>BIOPHYSICOCHEMICAL PROPERTIES</scope>
    <source>
        <strain>C57BL/6J</strain>
    </source>
</reference>
<reference key="5">
    <citation type="journal article" date="2010" name="Cell">
        <title>A tissue-specific atlas of mouse protein phosphorylation and expression.</title>
        <authorList>
            <person name="Huttlin E.L."/>
            <person name="Jedrychowski M.P."/>
            <person name="Elias J.E."/>
            <person name="Goswami T."/>
            <person name="Rad R."/>
            <person name="Beausoleil S.A."/>
            <person name="Villen J."/>
            <person name="Haas W."/>
            <person name="Sowa M.E."/>
            <person name="Gygi S.P."/>
        </authorList>
    </citation>
    <scope>IDENTIFICATION BY MASS SPECTROMETRY [LARGE SCALE ANALYSIS]</scope>
    <source>
        <tissue>Kidney</tissue>
        <tissue>Testis</tissue>
    </source>
</reference>
<organism>
    <name type="scientific">Mus musculus</name>
    <name type="common">Mouse</name>
    <dbReference type="NCBI Taxonomy" id="10090"/>
    <lineage>
        <taxon>Eukaryota</taxon>
        <taxon>Metazoa</taxon>
        <taxon>Chordata</taxon>
        <taxon>Craniata</taxon>
        <taxon>Vertebrata</taxon>
        <taxon>Euteleostomi</taxon>
        <taxon>Mammalia</taxon>
        <taxon>Eutheria</taxon>
        <taxon>Euarchontoglires</taxon>
        <taxon>Glires</taxon>
        <taxon>Rodentia</taxon>
        <taxon>Myomorpha</taxon>
        <taxon>Muroidea</taxon>
        <taxon>Muridae</taxon>
        <taxon>Murinae</taxon>
        <taxon>Mus</taxon>
        <taxon>Mus</taxon>
    </lineage>
</organism>
<dbReference type="EC" id="1.1.1.263" evidence="4"/>
<dbReference type="EMBL" id="U68535">
    <property type="protein sequence ID" value="AAB37274.1"/>
    <property type="molecule type" value="mRNA"/>
</dbReference>
<dbReference type="EMBL" id="AK002507">
    <property type="protein sequence ID" value="BAB22152.1"/>
    <property type="molecule type" value="mRNA"/>
</dbReference>
<dbReference type="EMBL" id="BC012692">
    <property type="protein sequence ID" value="AAH12692.1"/>
    <property type="molecule type" value="mRNA"/>
</dbReference>
<dbReference type="CCDS" id="CCDS26226.1"/>
<dbReference type="RefSeq" id="NP_061347.2">
    <property type="nucleotide sequence ID" value="NM_018859.2"/>
</dbReference>
<dbReference type="SMR" id="Q9DCT1"/>
<dbReference type="FunCoup" id="Q9DCT1">
    <property type="interactions" value="377"/>
</dbReference>
<dbReference type="STRING" id="10090.ENSMUSP00000089459"/>
<dbReference type="GlyGen" id="Q9DCT1">
    <property type="glycosylation" value="1 site, 1 N-linked glycan (1 site)"/>
</dbReference>
<dbReference type="iPTMnet" id="Q9DCT1"/>
<dbReference type="PhosphoSitePlus" id="Q9DCT1"/>
<dbReference type="SwissPalm" id="Q9DCT1"/>
<dbReference type="jPOST" id="Q9DCT1"/>
<dbReference type="PaxDb" id="10090-ENSMUSP00000089459"/>
<dbReference type="PeptideAtlas" id="Q9DCT1"/>
<dbReference type="ProteomicsDB" id="285798"/>
<dbReference type="Pumba" id="Q9DCT1"/>
<dbReference type="Antibodypedia" id="23956">
    <property type="antibodies" value="173 antibodies from 27 providers"/>
</dbReference>
<dbReference type="DNASU" id="56043"/>
<dbReference type="Ensembl" id="ENSMUST00000091848.7">
    <property type="protein sequence ID" value="ENSMUSP00000089459.6"/>
    <property type="gene ID" value="ENSMUSG00000045410.19"/>
</dbReference>
<dbReference type="GeneID" id="56043"/>
<dbReference type="KEGG" id="mmu:56043"/>
<dbReference type="UCSC" id="uc007pjs.1">
    <property type="organism name" value="mouse"/>
</dbReference>
<dbReference type="AGR" id="MGI:1914758"/>
<dbReference type="CTD" id="56043"/>
<dbReference type="MGI" id="MGI:1914758">
    <property type="gene designation" value="Akr1e1"/>
</dbReference>
<dbReference type="VEuPathDB" id="HostDB:ENSMUSG00000045410"/>
<dbReference type="eggNOG" id="KOG1577">
    <property type="taxonomic scope" value="Eukaryota"/>
</dbReference>
<dbReference type="GeneTree" id="ENSGT00940000153272"/>
<dbReference type="HOGENOM" id="CLU_023205_0_0_1"/>
<dbReference type="InParanoid" id="Q9DCT1"/>
<dbReference type="OMA" id="AWKAMEG"/>
<dbReference type="OrthoDB" id="416253at2759"/>
<dbReference type="PhylomeDB" id="Q9DCT1"/>
<dbReference type="TreeFam" id="TF106492"/>
<dbReference type="BRENDA" id="1.1.1.292">
    <property type="organism ID" value="3474"/>
</dbReference>
<dbReference type="SABIO-RK" id="Q9DCT1"/>
<dbReference type="BioGRID-ORCS" id="56043">
    <property type="hits" value="3 hits in 78 CRISPR screens"/>
</dbReference>
<dbReference type="PRO" id="PR:Q9DCT1"/>
<dbReference type="Proteomes" id="UP000000589">
    <property type="component" value="Chromosome 13"/>
</dbReference>
<dbReference type="RNAct" id="Q9DCT1">
    <property type="molecule type" value="protein"/>
</dbReference>
<dbReference type="Bgee" id="ENSMUSG00000045410">
    <property type="expression patterns" value="Expressed in right kidney and 235 other cell types or tissues"/>
</dbReference>
<dbReference type="ExpressionAtlas" id="Q9DCT1">
    <property type="expression patterns" value="baseline and differential"/>
</dbReference>
<dbReference type="GO" id="GO:0005737">
    <property type="term" value="C:cytoplasm"/>
    <property type="evidence" value="ECO:0007669"/>
    <property type="project" value="UniProtKB-SubCell"/>
</dbReference>
<dbReference type="GO" id="GO:0050571">
    <property type="term" value="F:1,5-anhydro-D-fructose reductase activity"/>
    <property type="evidence" value="ECO:0007669"/>
    <property type="project" value="UniProtKB-EC"/>
</dbReference>
<dbReference type="FunFam" id="3.20.20.100:FF:000030">
    <property type="entry name" value="Aldo-keto reductase family 1 member E2"/>
    <property type="match status" value="1"/>
</dbReference>
<dbReference type="Gene3D" id="3.20.20.100">
    <property type="entry name" value="NADP-dependent oxidoreductase domain"/>
    <property type="match status" value="1"/>
</dbReference>
<dbReference type="InterPro" id="IPR020471">
    <property type="entry name" value="AKR"/>
</dbReference>
<dbReference type="InterPro" id="IPR018170">
    <property type="entry name" value="Aldo/ket_reductase_CS"/>
</dbReference>
<dbReference type="InterPro" id="IPR023210">
    <property type="entry name" value="NADP_OxRdtase_dom"/>
</dbReference>
<dbReference type="InterPro" id="IPR036812">
    <property type="entry name" value="NADP_OxRdtase_dom_sf"/>
</dbReference>
<dbReference type="PANTHER" id="PTHR11732">
    <property type="entry name" value="ALDO/KETO REDUCTASE"/>
    <property type="match status" value="1"/>
</dbReference>
<dbReference type="Pfam" id="PF00248">
    <property type="entry name" value="Aldo_ket_red"/>
    <property type="match status" value="1"/>
</dbReference>
<dbReference type="PIRSF" id="PIRSF000097">
    <property type="entry name" value="AKR"/>
    <property type="match status" value="1"/>
</dbReference>
<dbReference type="PRINTS" id="PR00069">
    <property type="entry name" value="ALDKETRDTASE"/>
</dbReference>
<dbReference type="SUPFAM" id="SSF51430">
    <property type="entry name" value="NAD(P)-linked oxidoreductase"/>
    <property type="match status" value="1"/>
</dbReference>
<dbReference type="PROSITE" id="PS00798">
    <property type="entry name" value="ALDOKETO_REDUCTASE_1"/>
    <property type="match status" value="1"/>
</dbReference>
<dbReference type="PROSITE" id="PS00062">
    <property type="entry name" value="ALDOKETO_REDUCTASE_2"/>
    <property type="match status" value="1"/>
</dbReference>
<dbReference type="PROSITE" id="PS00063">
    <property type="entry name" value="ALDOKETO_REDUCTASE_3"/>
    <property type="match status" value="1"/>
</dbReference>